<feature type="chain" id="PRO_0000188671" description="1,4-alpha-glucan branching enzyme GlgB">
    <location>
        <begin position="1"/>
        <end position="734"/>
    </location>
</feature>
<feature type="active site" description="Nucleophile" evidence="1">
    <location>
        <position position="417"/>
    </location>
</feature>
<feature type="active site" description="Proton donor" evidence="1">
    <location>
        <position position="470"/>
    </location>
</feature>
<protein>
    <recommendedName>
        <fullName>1,4-alpha-glucan branching enzyme GlgB</fullName>
        <ecNumber>2.4.1.18</ecNumber>
    </recommendedName>
    <alternativeName>
        <fullName>1,4-alpha-D-glucan:1,4-alpha-D-glucan 6-glucosyl-transferase</fullName>
    </alternativeName>
    <alternativeName>
        <fullName>Alpha-(1-&gt;4)-glucan branching enzyme</fullName>
    </alternativeName>
    <alternativeName>
        <fullName>Glycogen branching enzyme</fullName>
        <shortName>BE</shortName>
    </alternativeName>
</protein>
<accession>P52979</accession>
<dbReference type="EC" id="2.4.1.18"/>
<dbReference type="EMBL" id="AF033856">
    <property type="protein sequence ID" value="AAD03472.1"/>
    <property type="molecule type" value="Genomic_DNA"/>
</dbReference>
<dbReference type="SMR" id="P52979"/>
<dbReference type="CAZy" id="CBM48">
    <property type="family name" value="Carbohydrate-Binding Module Family 48"/>
</dbReference>
<dbReference type="CAZy" id="GH13">
    <property type="family name" value="Glycoside Hydrolase Family 13"/>
</dbReference>
<dbReference type="eggNOG" id="COG0296">
    <property type="taxonomic scope" value="Bacteria"/>
</dbReference>
<dbReference type="UniPathway" id="UPA00164"/>
<dbReference type="GO" id="GO:0005829">
    <property type="term" value="C:cytosol"/>
    <property type="evidence" value="ECO:0007669"/>
    <property type="project" value="TreeGrafter"/>
</dbReference>
<dbReference type="GO" id="GO:0003844">
    <property type="term" value="F:1,4-alpha-glucan branching enzyme activity"/>
    <property type="evidence" value="ECO:0007669"/>
    <property type="project" value="UniProtKB-UniRule"/>
</dbReference>
<dbReference type="GO" id="GO:0043169">
    <property type="term" value="F:cation binding"/>
    <property type="evidence" value="ECO:0007669"/>
    <property type="project" value="InterPro"/>
</dbReference>
<dbReference type="GO" id="GO:0004553">
    <property type="term" value="F:hydrolase activity, hydrolyzing O-glycosyl compounds"/>
    <property type="evidence" value="ECO:0007669"/>
    <property type="project" value="InterPro"/>
</dbReference>
<dbReference type="GO" id="GO:0005978">
    <property type="term" value="P:glycogen biosynthetic process"/>
    <property type="evidence" value="ECO:0007669"/>
    <property type="project" value="UniProtKB-UniRule"/>
</dbReference>
<dbReference type="CDD" id="cd11322">
    <property type="entry name" value="AmyAc_Glg_BE"/>
    <property type="match status" value="1"/>
</dbReference>
<dbReference type="CDD" id="cd02855">
    <property type="entry name" value="E_set_GBE_prok_N"/>
    <property type="match status" value="1"/>
</dbReference>
<dbReference type="FunFam" id="2.60.40.1180:FF:000002">
    <property type="entry name" value="1,4-alpha-glucan branching enzyme GlgB"/>
    <property type="match status" value="1"/>
</dbReference>
<dbReference type="FunFam" id="3.20.20.80:FF:000003">
    <property type="entry name" value="1,4-alpha-glucan branching enzyme GlgB"/>
    <property type="match status" value="1"/>
</dbReference>
<dbReference type="Gene3D" id="3.20.20.80">
    <property type="entry name" value="Glycosidases"/>
    <property type="match status" value="1"/>
</dbReference>
<dbReference type="Gene3D" id="2.60.40.1180">
    <property type="entry name" value="Golgi alpha-mannosidase II"/>
    <property type="match status" value="1"/>
</dbReference>
<dbReference type="Gene3D" id="2.60.40.10">
    <property type="entry name" value="Immunoglobulins"/>
    <property type="match status" value="1"/>
</dbReference>
<dbReference type="HAMAP" id="MF_00685">
    <property type="entry name" value="GlgB"/>
    <property type="match status" value="1"/>
</dbReference>
<dbReference type="InterPro" id="IPR006048">
    <property type="entry name" value="A-amylase/branching_C"/>
</dbReference>
<dbReference type="InterPro" id="IPR037439">
    <property type="entry name" value="Branching_enzy"/>
</dbReference>
<dbReference type="InterPro" id="IPR006407">
    <property type="entry name" value="GlgB"/>
</dbReference>
<dbReference type="InterPro" id="IPR054169">
    <property type="entry name" value="GlgB_N"/>
</dbReference>
<dbReference type="InterPro" id="IPR044143">
    <property type="entry name" value="GlgB_N_E_set_prok"/>
</dbReference>
<dbReference type="InterPro" id="IPR006047">
    <property type="entry name" value="Glyco_hydro_13_cat_dom"/>
</dbReference>
<dbReference type="InterPro" id="IPR004193">
    <property type="entry name" value="Glyco_hydro_13_N"/>
</dbReference>
<dbReference type="InterPro" id="IPR013780">
    <property type="entry name" value="Glyco_hydro_b"/>
</dbReference>
<dbReference type="InterPro" id="IPR017853">
    <property type="entry name" value="Glycoside_hydrolase_SF"/>
</dbReference>
<dbReference type="InterPro" id="IPR013783">
    <property type="entry name" value="Ig-like_fold"/>
</dbReference>
<dbReference type="InterPro" id="IPR014756">
    <property type="entry name" value="Ig_E-set"/>
</dbReference>
<dbReference type="NCBIfam" id="TIGR01515">
    <property type="entry name" value="branching_enzym"/>
    <property type="match status" value="1"/>
</dbReference>
<dbReference type="NCBIfam" id="NF003811">
    <property type="entry name" value="PRK05402.1"/>
    <property type="match status" value="1"/>
</dbReference>
<dbReference type="NCBIfam" id="NF008967">
    <property type="entry name" value="PRK12313.1"/>
    <property type="match status" value="1"/>
</dbReference>
<dbReference type="PANTHER" id="PTHR43651">
    <property type="entry name" value="1,4-ALPHA-GLUCAN-BRANCHING ENZYME"/>
    <property type="match status" value="1"/>
</dbReference>
<dbReference type="PANTHER" id="PTHR43651:SF3">
    <property type="entry name" value="1,4-ALPHA-GLUCAN-BRANCHING ENZYME"/>
    <property type="match status" value="1"/>
</dbReference>
<dbReference type="Pfam" id="PF00128">
    <property type="entry name" value="Alpha-amylase"/>
    <property type="match status" value="1"/>
</dbReference>
<dbReference type="Pfam" id="PF02806">
    <property type="entry name" value="Alpha-amylase_C"/>
    <property type="match status" value="1"/>
</dbReference>
<dbReference type="Pfam" id="PF02922">
    <property type="entry name" value="CBM_48"/>
    <property type="match status" value="1"/>
</dbReference>
<dbReference type="Pfam" id="PF22019">
    <property type="entry name" value="GlgB_N"/>
    <property type="match status" value="1"/>
</dbReference>
<dbReference type="PIRSF" id="PIRSF000463">
    <property type="entry name" value="GlgB"/>
    <property type="match status" value="1"/>
</dbReference>
<dbReference type="SMART" id="SM00642">
    <property type="entry name" value="Aamy"/>
    <property type="match status" value="1"/>
</dbReference>
<dbReference type="SUPFAM" id="SSF51445">
    <property type="entry name" value="(Trans)glycosidases"/>
    <property type="match status" value="1"/>
</dbReference>
<dbReference type="SUPFAM" id="SSF81296">
    <property type="entry name" value="E set domains"/>
    <property type="match status" value="2"/>
</dbReference>
<dbReference type="SUPFAM" id="SSF51011">
    <property type="entry name" value="Glycosyl hydrolase domain"/>
    <property type="match status" value="1"/>
</dbReference>
<keyword id="KW-0119">Carbohydrate metabolism</keyword>
<keyword id="KW-0320">Glycogen biosynthesis</keyword>
<keyword id="KW-0321">Glycogen metabolism</keyword>
<keyword id="KW-0328">Glycosyltransferase</keyword>
<keyword id="KW-0808">Transferase</keyword>
<comment type="function">
    <text evidence="1">Catalyzes the formation of the alpha-1,6-glucosidic linkages in glycogen by scission of a 1,4-alpha-linked oligosaccharide from growing alpha-1,4-glucan chains and the subsequent attachment of the oligosaccharide to the alpha-1,6 position.</text>
</comment>
<comment type="catalytic activity">
    <reaction>
        <text>Transfers a segment of a (1-&gt;4)-alpha-D-glucan chain to a primary hydroxy group in a similar glucan chain.</text>
        <dbReference type="EC" id="2.4.1.18"/>
    </reaction>
</comment>
<comment type="pathway">
    <text>Glycan biosynthesis; glycogen biosynthesis.</text>
</comment>
<comment type="subunit">
    <text evidence="1">Monomer.</text>
</comment>
<comment type="similarity">
    <text evidence="2">Belongs to the glycosyl hydrolase 13 family. GlgB subfamily.</text>
</comment>
<reference key="1">
    <citation type="journal article" date="1998" name="J. Bacteriol.">
        <title>Gene organization and transcription analysis of the Agrobacterium tumefaciens glycogen (glg) operon: two transcripts for the single phosphoglucomutase gene.</title>
        <authorList>
            <person name="Ugalde J.E."/>
            <person name="Lepek V."/>
            <person name="Uttaro A.D."/>
            <person name="Estrella J."/>
            <person name="Iglesias A."/>
            <person name="Ugalde R.A."/>
        </authorList>
    </citation>
    <scope>NUCLEOTIDE SEQUENCE [GENOMIC DNA]</scope>
    <source>
        <strain>A348</strain>
    </source>
</reference>
<evidence type="ECO:0000250" key="1"/>
<evidence type="ECO:0000305" key="2"/>
<proteinExistence type="inferred from homology"/>
<organism>
    <name type="scientific">Rhizobium radiobacter</name>
    <name type="common">Agrobacterium tumefaciens</name>
    <name type="synonym">Agrobacterium radiobacter</name>
    <dbReference type="NCBI Taxonomy" id="358"/>
    <lineage>
        <taxon>Bacteria</taxon>
        <taxon>Pseudomonadati</taxon>
        <taxon>Pseudomonadota</taxon>
        <taxon>Alphaproteobacteria</taxon>
        <taxon>Hyphomicrobiales</taxon>
        <taxon>Rhizobiaceae</taxon>
        <taxon>Rhizobium/Agrobacterium group</taxon>
        <taxon>Agrobacterium</taxon>
        <taxon>Agrobacterium tumefaciens complex</taxon>
    </lineage>
</organism>
<name>GLGB_RHIRD</name>
<sequence>MKKPLNSAEEKKTGDITKAEIEAIKSGLHSNPFQIIPLHETPEGFSARCFIPGAEEVSVLTLDGNFVGELKQIDPDGFFEGRIDLSKRQPVRYRACRDDAEWAVTDPYSFGPVLGPMDDYFVREGSICGYSTGWARIPLKLEGVEGFHFAVWAPNGRRVSVVGDFNNWDGRRHVMRFRKDTGIWEIFAPDVYACAYKFEILGANGELLPLKADPYARRGELRPKNASVTAPELTQKWEDQAHREHWAQVDQRRQPISIYEVHAGSWQRSEDGTFLSWDELEAQLIPYCTDMGFTHIEFLPITEHPYDPSWGYQTTGLYAPTARFGDPEGFARFVNGAHKVGIGVLLDWVPAHFPTDEHGLRWFDGTALYEHADPRQGFHPDWNTAIYNFGRIEVMSYLINNALYWAEKFHLDGLRVDAVASMLYLDYSRKEGEWIPNEYGGRENLESVRFLQKMNSLVYGTHPGVMTIAEESTSWPKVSQPVHEGGLGFGFKWNMGFMHDTLSYFSREPVHRKFHHQELTFGLLYAFTENFVLPLSHDEVVHGKGSLIAKMSGDDWQKFANLRSYYGFMWGYPGKKLLFMGQEFAQWSEWSEKGSLDWNLRQYPMHEGMRRLVRDLNLTYRSKAALHARDCEPDGFRWLVVDDHENSVFAWLRTAPGEKPVAVICNLTPVYRENYYVPLGVAGRWREILNTDAEIYGGSGKGNGGRVQAVDAGGEIGAMLVLPPLATIMLEPEN</sequence>
<gene>
    <name type="primary">glgB</name>
</gene>